<proteinExistence type="inferred from homology"/>
<feature type="chain" id="PRO_1000081865" description="4-hydroxythreonine-4-phosphate dehydrogenase">
    <location>
        <begin position="1"/>
        <end position="328"/>
    </location>
</feature>
<feature type="binding site" evidence="1">
    <location>
        <position position="130"/>
    </location>
    <ligand>
        <name>substrate</name>
    </ligand>
</feature>
<feature type="binding site" evidence="1">
    <location>
        <position position="131"/>
    </location>
    <ligand>
        <name>substrate</name>
    </ligand>
</feature>
<feature type="binding site" evidence="1">
    <location>
        <position position="163"/>
    </location>
    <ligand>
        <name>a divalent metal cation</name>
        <dbReference type="ChEBI" id="CHEBI:60240"/>
        <note>ligand shared between dimeric partners</note>
    </ligand>
</feature>
<feature type="binding site" evidence="1">
    <location>
        <position position="208"/>
    </location>
    <ligand>
        <name>a divalent metal cation</name>
        <dbReference type="ChEBI" id="CHEBI:60240"/>
        <note>ligand shared between dimeric partners</note>
    </ligand>
</feature>
<feature type="binding site" evidence="1">
    <location>
        <position position="263"/>
    </location>
    <ligand>
        <name>a divalent metal cation</name>
        <dbReference type="ChEBI" id="CHEBI:60240"/>
        <note>ligand shared between dimeric partners</note>
    </ligand>
</feature>
<feature type="binding site" evidence="1">
    <location>
        <position position="271"/>
    </location>
    <ligand>
        <name>substrate</name>
    </ligand>
</feature>
<feature type="binding site" evidence="1">
    <location>
        <position position="280"/>
    </location>
    <ligand>
        <name>substrate</name>
    </ligand>
</feature>
<feature type="binding site" evidence="1">
    <location>
        <position position="289"/>
    </location>
    <ligand>
        <name>substrate</name>
    </ligand>
</feature>
<gene>
    <name evidence="1" type="primary">pdxA</name>
    <name type="ordered locus">Bcep1808_2810</name>
</gene>
<organism>
    <name type="scientific">Burkholderia vietnamiensis (strain G4 / LMG 22486)</name>
    <name type="common">Burkholderia cepacia (strain R1808)</name>
    <dbReference type="NCBI Taxonomy" id="269482"/>
    <lineage>
        <taxon>Bacteria</taxon>
        <taxon>Pseudomonadati</taxon>
        <taxon>Pseudomonadota</taxon>
        <taxon>Betaproteobacteria</taxon>
        <taxon>Burkholderiales</taxon>
        <taxon>Burkholderiaceae</taxon>
        <taxon>Burkholderia</taxon>
        <taxon>Burkholderia cepacia complex</taxon>
    </lineage>
</organism>
<evidence type="ECO:0000255" key="1">
    <source>
        <dbReference type="HAMAP-Rule" id="MF_00536"/>
    </source>
</evidence>
<protein>
    <recommendedName>
        <fullName evidence="1">4-hydroxythreonine-4-phosphate dehydrogenase</fullName>
        <ecNumber evidence="1">1.1.1.262</ecNumber>
    </recommendedName>
    <alternativeName>
        <fullName evidence="1">4-(phosphohydroxy)-L-threonine dehydrogenase</fullName>
    </alternativeName>
</protein>
<accession>A4JHP8</accession>
<name>PDXA_BURVG</name>
<sequence length="328" mass="34050">MTAAALQIAITTGEPAGVGPELTVQALQDAARRWPDAQFTVLGDAALLDARAAAVGADRAVLAGGPVSVQHHPLAAPAHAGTLDAANGRYVLALLDAAIDGALAGRYDAIVTAPLQKSTINDAGVPFTGHTEYLAERTHTPRVVMMLAGTGERPLRVALATTHLPLKDVSAALTIDGLVDTLAIIDRDLRRDFGLAAPRILVTGLNPHAGENGYLGREEIDVIAPALARASERGIDARGPYPADTLFQPRYLAGADCVLAMFHDQGLPVLKYATFGEGINVTLGLPIIRTSVDHGTALDLAGTGRADPGSMVAALDTAVTMARHRRAS</sequence>
<dbReference type="EC" id="1.1.1.262" evidence="1"/>
<dbReference type="EMBL" id="CP000614">
    <property type="protein sequence ID" value="ABO55801.1"/>
    <property type="molecule type" value="Genomic_DNA"/>
</dbReference>
<dbReference type="SMR" id="A4JHP8"/>
<dbReference type="KEGG" id="bvi:Bcep1808_2810"/>
<dbReference type="eggNOG" id="COG1995">
    <property type="taxonomic scope" value="Bacteria"/>
</dbReference>
<dbReference type="HOGENOM" id="CLU_040168_2_0_4"/>
<dbReference type="UniPathway" id="UPA00244">
    <property type="reaction ID" value="UER00312"/>
</dbReference>
<dbReference type="Proteomes" id="UP000002287">
    <property type="component" value="Chromosome 1"/>
</dbReference>
<dbReference type="GO" id="GO:0005737">
    <property type="term" value="C:cytoplasm"/>
    <property type="evidence" value="ECO:0007669"/>
    <property type="project" value="UniProtKB-SubCell"/>
</dbReference>
<dbReference type="GO" id="GO:0050570">
    <property type="term" value="F:4-hydroxythreonine-4-phosphate dehydrogenase activity"/>
    <property type="evidence" value="ECO:0007669"/>
    <property type="project" value="UniProtKB-UniRule"/>
</dbReference>
<dbReference type="GO" id="GO:0050897">
    <property type="term" value="F:cobalt ion binding"/>
    <property type="evidence" value="ECO:0007669"/>
    <property type="project" value="UniProtKB-UniRule"/>
</dbReference>
<dbReference type="GO" id="GO:0000287">
    <property type="term" value="F:magnesium ion binding"/>
    <property type="evidence" value="ECO:0007669"/>
    <property type="project" value="UniProtKB-UniRule"/>
</dbReference>
<dbReference type="GO" id="GO:0051287">
    <property type="term" value="F:NAD binding"/>
    <property type="evidence" value="ECO:0007669"/>
    <property type="project" value="InterPro"/>
</dbReference>
<dbReference type="GO" id="GO:0008270">
    <property type="term" value="F:zinc ion binding"/>
    <property type="evidence" value="ECO:0007669"/>
    <property type="project" value="UniProtKB-UniRule"/>
</dbReference>
<dbReference type="GO" id="GO:0042823">
    <property type="term" value="P:pyridoxal phosphate biosynthetic process"/>
    <property type="evidence" value="ECO:0007669"/>
    <property type="project" value="UniProtKB-UniRule"/>
</dbReference>
<dbReference type="GO" id="GO:0008615">
    <property type="term" value="P:pyridoxine biosynthetic process"/>
    <property type="evidence" value="ECO:0007669"/>
    <property type="project" value="UniProtKB-UniRule"/>
</dbReference>
<dbReference type="Gene3D" id="3.40.718.10">
    <property type="entry name" value="Isopropylmalate Dehydrogenase"/>
    <property type="match status" value="1"/>
</dbReference>
<dbReference type="HAMAP" id="MF_00536">
    <property type="entry name" value="PdxA"/>
    <property type="match status" value="1"/>
</dbReference>
<dbReference type="InterPro" id="IPR037510">
    <property type="entry name" value="PdxA"/>
</dbReference>
<dbReference type="InterPro" id="IPR005255">
    <property type="entry name" value="PdxA_fam"/>
</dbReference>
<dbReference type="NCBIfam" id="TIGR00557">
    <property type="entry name" value="pdxA"/>
    <property type="match status" value="1"/>
</dbReference>
<dbReference type="NCBIfam" id="NF002520">
    <property type="entry name" value="PRK01909.1"/>
    <property type="match status" value="1"/>
</dbReference>
<dbReference type="PANTHER" id="PTHR30004">
    <property type="entry name" value="4-HYDROXYTHREONINE-4-PHOSPHATE DEHYDROGENASE"/>
    <property type="match status" value="1"/>
</dbReference>
<dbReference type="PANTHER" id="PTHR30004:SF5">
    <property type="entry name" value="4-HYDROXYTHREONINE-4-PHOSPHATE DEHYDROGENASE"/>
    <property type="match status" value="1"/>
</dbReference>
<dbReference type="Pfam" id="PF04166">
    <property type="entry name" value="PdxA"/>
    <property type="match status" value="1"/>
</dbReference>
<dbReference type="SUPFAM" id="SSF53659">
    <property type="entry name" value="Isocitrate/Isopropylmalate dehydrogenase-like"/>
    <property type="match status" value="1"/>
</dbReference>
<comment type="function">
    <text evidence="1">Catalyzes the NAD(P)-dependent oxidation of 4-(phosphooxy)-L-threonine (HTP) into 2-amino-3-oxo-4-(phosphooxy)butyric acid which spontaneously decarboxylates to form 3-amino-2-oxopropyl phosphate (AHAP).</text>
</comment>
<comment type="catalytic activity">
    <reaction evidence="1">
        <text>4-(phosphooxy)-L-threonine + NAD(+) = 3-amino-2-oxopropyl phosphate + CO2 + NADH</text>
        <dbReference type="Rhea" id="RHEA:32275"/>
        <dbReference type="ChEBI" id="CHEBI:16526"/>
        <dbReference type="ChEBI" id="CHEBI:57279"/>
        <dbReference type="ChEBI" id="CHEBI:57540"/>
        <dbReference type="ChEBI" id="CHEBI:57945"/>
        <dbReference type="ChEBI" id="CHEBI:58452"/>
        <dbReference type="EC" id="1.1.1.262"/>
    </reaction>
</comment>
<comment type="cofactor">
    <cofactor evidence="1">
        <name>Zn(2+)</name>
        <dbReference type="ChEBI" id="CHEBI:29105"/>
    </cofactor>
    <cofactor evidence="1">
        <name>Mg(2+)</name>
        <dbReference type="ChEBI" id="CHEBI:18420"/>
    </cofactor>
    <cofactor evidence="1">
        <name>Co(2+)</name>
        <dbReference type="ChEBI" id="CHEBI:48828"/>
    </cofactor>
    <text evidence="1">Binds 1 divalent metal cation per subunit. Can use ions such as Zn(2+), Mg(2+) or Co(2+).</text>
</comment>
<comment type="pathway">
    <text evidence="1">Cofactor biosynthesis; pyridoxine 5'-phosphate biosynthesis; pyridoxine 5'-phosphate from D-erythrose 4-phosphate: step 4/5.</text>
</comment>
<comment type="subunit">
    <text evidence="1">Homodimer.</text>
</comment>
<comment type="subcellular location">
    <subcellularLocation>
        <location evidence="1">Cytoplasm</location>
    </subcellularLocation>
</comment>
<comment type="miscellaneous">
    <text evidence="1">The active site is located at the dimer interface.</text>
</comment>
<comment type="similarity">
    <text evidence="1">Belongs to the PdxA family.</text>
</comment>
<reference key="1">
    <citation type="submission" date="2007-03" db="EMBL/GenBank/DDBJ databases">
        <title>Complete sequence of chromosome 1 of Burkholderia vietnamiensis G4.</title>
        <authorList>
            <consortium name="US DOE Joint Genome Institute"/>
            <person name="Copeland A."/>
            <person name="Lucas S."/>
            <person name="Lapidus A."/>
            <person name="Barry K."/>
            <person name="Detter J.C."/>
            <person name="Glavina del Rio T."/>
            <person name="Hammon N."/>
            <person name="Israni S."/>
            <person name="Dalin E."/>
            <person name="Tice H."/>
            <person name="Pitluck S."/>
            <person name="Chain P."/>
            <person name="Malfatti S."/>
            <person name="Shin M."/>
            <person name="Vergez L."/>
            <person name="Schmutz J."/>
            <person name="Larimer F."/>
            <person name="Land M."/>
            <person name="Hauser L."/>
            <person name="Kyrpides N."/>
            <person name="Tiedje J."/>
            <person name="Richardson P."/>
        </authorList>
    </citation>
    <scope>NUCLEOTIDE SEQUENCE [LARGE SCALE GENOMIC DNA]</scope>
    <source>
        <strain>G4 / LMG 22486</strain>
    </source>
</reference>
<keyword id="KW-0170">Cobalt</keyword>
<keyword id="KW-0963">Cytoplasm</keyword>
<keyword id="KW-0460">Magnesium</keyword>
<keyword id="KW-0479">Metal-binding</keyword>
<keyword id="KW-0520">NAD</keyword>
<keyword id="KW-0521">NADP</keyword>
<keyword id="KW-0560">Oxidoreductase</keyword>
<keyword id="KW-0664">Pyridoxine biosynthesis</keyword>
<keyword id="KW-0862">Zinc</keyword>